<keyword id="KW-0963">Cytoplasm</keyword>
<keyword id="KW-0217">Developmental protein</keyword>
<keyword id="KW-0221">Differentiation</keyword>
<keyword id="KW-0238">DNA-binding</keyword>
<keyword id="KW-0333">Golgi apparatus</keyword>
<keyword id="KW-1017">Isopeptide bond</keyword>
<keyword id="KW-0460">Magnesium</keyword>
<keyword id="KW-0479">Metal-binding</keyword>
<keyword id="KW-0539">Nucleus</keyword>
<keyword id="KW-1185">Reference proteome</keyword>
<keyword id="KW-0744">Spermatogenesis</keyword>
<keyword id="KW-0832">Ubl conjugation</keyword>
<accession>Q9JHB5</accession>
<protein>
    <recommendedName>
        <fullName>Translin-associated protein X</fullName>
    </recommendedName>
    <alternativeName>
        <fullName>Translin-associated factor X</fullName>
    </alternativeName>
</protein>
<reference key="1">
    <citation type="journal article" date="1998" name="J. Neurochem.">
        <title>Identification of translin and trax as components of the GS1 strand-specific DNA binding complex enriched in brain.</title>
        <authorList>
            <person name="Taira E."/>
            <person name="Finkenstadt P.M."/>
            <person name="Baraban J.M."/>
        </authorList>
    </citation>
    <scope>NUCLEOTIDE SEQUENCE [MRNA]</scope>
    <scope>SUBCELLULAR LOCATION</scope>
    <scope>TISSUE SPECIFICITY</scope>
    <scope>IDENTIFICATION IN A DNA-BINDING COMPLEX WITH TSN</scope>
    <source>
        <tissue>Brain</tissue>
    </source>
</reference>
<reference key="2">
    <citation type="journal article" date="2004" name="Genome Res.">
        <title>The status, quality, and expansion of the NIH full-length cDNA project: the Mammalian Gene Collection (MGC).</title>
        <authorList>
            <consortium name="The MGC Project Team"/>
        </authorList>
    </citation>
    <scope>NUCLEOTIDE SEQUENCE [LARGE SCALE MRNA]</scope>
    <source>
        <tissue>Kidney</tissue>
    </source>
</reference>
<reference key="3">
    <citation type="journal article" date="2012" name="Nat. Commun.">
        <title>Quantitative maps of protein phosphorylation sites across 14 different rat organs and tissues.</title>
        <authorList>
            <person name="Lundby A."/>
            <person name="Secher A."/>
            <person name="Lage K."/>
            <person name="Nordsborg N.B."/>
            <person name="Dmytriyev A."/>
            <person name="Lundby C."/>
            <person name="Olsen J.V."/>
        </authorList>
    </citation>
    <scope>IDENTIFICATION BY MASS SPECTROMETRY [LARGE SCALE ANALYSIS]</scope>
</reference>
<organism>
    <name type="scientific">Rattus norvegicus</name>
    <name type="common">Rat</name>
    <dbReference type="NCBI Taxonomy" id="10116"/>
    <lineage>
        <taxon>Eukaryota</taxon>
        <taxon>Metazoa</taxon>
        <taxon>Chordata</taxon>
        <taxon>Craniata</taxon>
        <taxon>Vertebrata</taxon>
        <taxon>Euteleostomi</taxon>
        <taxon>Mammalia</taxon>
        <taxon>Eutheria</taxon>
        <taxon>Euarchontoglires</taxon>
        <taxon>Glires</taxon>
        <taxon>Rodentia</taxon>
        <taxon>Myomorpha</taxon>
        <taxon>Muroidea</taxon>
        <taxon>Muridae</taxon>
        <taxon>Murinae</taxon>
        <taxon>Rattus</taxon>
    </lineage>
</organism>
<gene>
    <name type="primary">Tsnax</name>
    <name type="synonym">Trax</name>
</gene>
<feature type="chain" id="PRO_0000191689" description="Translin-associated protein X">
    <location>
        <begin position="1"/>
        <end position="290"/>
    </location>
</feature>
<feature type="region of interest" description="Disordered" evidence="3">
    <location>
        <begin position="1"/>
        <end position="34"/>
    </location>
</feature>
<feature type="region of interest" description="Interaction with C1D" evidence="1">
    <location>
        <begin position="73"/>
        <end position="208"/>
    </location>
</feature>
<feature type="compositionally biased region" description="Basic and acidic residues" evidence="3">
    <location>
        <begin position="16"/>
        <end position="28"/>
    </location>
</feature>
<feature type="binding site" evidence="1">
    <location>
        <position position="129"/>
    </location>
    <ligand>
        <name>Mg(2+)</name>
        <dbReference type="ChEBI" id="CHEBI:18420"/>
    </ligand>
</feature>
<feature type="binding site" evidence="1">
    <location>
        <position position="197"/>
    </location>
    <ligand>
        <name>Mg(2+)</name>
        <dbReference type="ChEBI" id="CHEBI:18420"/>
    </ligand>
</feature>
<feature type="cross-link" description="Glycyl lysine isopeptide (Lys-Gly) (interchain with G-Cter in SUMO2)" evidence="2">
    <location>
        <position position="279"/>
    </location>
</feature>
<proteinExistence type="evidence at protein level"/>
<name>TSNAX_RAT</name>
<evidence type="ECO:0000250" key="1"/>
<evidence type="ECO:0000250" key="2">
    <source>
        <dbReference type="UniProtKB" id="Q99598"/>
    </source>
</evidence>
<evidence type="ECO:0000256" key="3">
    <source>
        <dbReference type="SAM" id="MobiDB-lite"/>
    </source>
</evidence>
<evidence type="ECO:0000269" key="4">
    <source>
    </source>
</evidence>
<evidence type="ECO:0000305" key="5"/>
<comment type="function">
    <text evidence="1">Acts in combination with TSN as an endonuclease involved in the activation of the RNA-induced silencing complex (RISC). Possible role in spermatogenesis (By similarity).</text>
</comment>
<comment type="subunit">
    <text evidence="1">Ring-shaped heterooctamer of six TSN and two TSNAX subunits. Interacts with GOLGA3, TSNAXIP1, SUN1 and AKAP9. Interacts with the homodimeric form of C1D following gamma-radiation. Interacts with TSN and C1D in a mutually exclusive manner (By similarity).</text>
</comment>
<comment type="subcellular location">
    <subcellularLocation>
        <location evidence="1">Cytoplasm</location>
        <location evidence="1">Perinuclear region</location>
    </subcellularLocation>
    <subcellularLocation>
        <location evidence="4">Golgi apparatus</location>
    </subcellularLocation>
    <subcellularLocation>
        <location evidence="1">Nucleus</location>
    </subcellularLocation>
    <text evidence="1">Expressed in the cytoplasm in the presence of TSN. Accumulate in the Golgi complex of mid-late pachytene spermatocytes (By similarity).</text>
</comment>
<comment type="tissue specificity">
    <text evidence="4">Detected in cerebellum.</text>
</comment>
<comment type="PTM">
    <text evidence="1">Sumoylated with SUMO1.</text>
</comment>
<comment type="similarity">
    <text evidence="5">Belongs to the translin family.</text>
</comment>
<sequence length="290" mass="33005">MNGKEGPGGFRKRKHDNFPHNQRREGKDASSSSPVMLAFKSFQQELDTRHDKYERLVKLSRDITVESKRTIFLLHRITSAPDMEEILTESESKLDGVRQKMLQVAQELSGEDMHQFHRAVTTGLQEYVEAVSFQHFIRTRSLISMEEINRQLTFTTDDSGKESKAPPADGQDKQLVTWRLKITPVDYLLGVADLTGELMRMCINSVGNGDIDTPFEVSQFLRQVYDGFSFIGNTGPYEVSKKLYTLKQSLSKVENACYALKVRGSEIPKHMLADVFSVKTEMIDQEESIS</sequence>
<dbReference type="EMBL" id="AF262357">
    <property type="protein sequence ID" value="AAF76149.1"/>
    <property type="molecule type" value="mRNA"/>
</dbReference>
<dbReference type="EMBL" id="BC081715">
    <property type="protein sequence ID" value="AAH81715.1"/>
    <property type="molecule type" value="mRNA"/>
</dbReference>
<dbReference type="RefSeq" id="NP_071598.1">
    <property type="nucleotide sequence ID" value="NM_022262.3"/>
</dbReference>
<dbReference type="SMR" id="Q9JHB5"/>
<dbReference type="CORUM" id="Q9JHB5"/>
<dbReference type="FunCoup" id="Q9JHB5">
    <property type="interactions" value="3507"/>
</dbReference>
<dbReference type="IntAct" id="Q9JHB5">
    <property type="interactions" value="1"/>
</dbReference>
<dbReference type="STRING" id="10116.ENSRNOP00000063911"/>
<dbReference type="GlyGen" id="Q9JHB5">
    <property type="glycosylation" value="1 site"/>
</dbReference>
<dbReference type="iPTMnet" id="Q9JHB5"/>
<dbReference type="PhosphoSitePlus" id="Q9JHB5"/>
<dbReference type="jPOST" id="Q9JHB5"/>
<dbReference type="PaxDb" id="10116-ENSRNOP00000063911"/>
<dbReference type="Ensembl" id="ENSRNOT00000071827.3">
    <property type="protein sequence ID" value="ENSRNOP00000063911.1"/>
    <property type="gene ID" value="ENSRNOG00000049784.3"/>
</dbReference>
<dbReference type="GeneID" id="64028"/>
<dbReference type="KEGG" id="rno:64028"/>
<dbReference type="AGR" id="RGD:621574"/>
<dbReference type="CTD" id="7257"/>
<dbReference type="RGD" id="621574">
    <property type="gene designation" value="Tsnax"/>
</dbReference>
<dbReference type="eggNOG" id="KOG3066">
    <property type="taxonomic scope" value="Eukaryota"/>
</dbReference>
<dbReference type="GeneTree" id="ENSGT00940000153568"/>
<dbReference type="HOGENOM" id="CLU_067225_1_0_1"/>
<dbReference type="InParanoid" id="Q9JHB5"/>
<dbReference type="OMA" id="DTCMETC"/>
<dbReference type="OrthoDB" id="31005at2759"/>
<dbReference type="PhylomeDB" id="Q9JHB5"/>
<dbReference type="Reactome" id="R-RNO-426486">
    <property type="pathway name" value="Small interfering RNA (siRNA) biogenesis"/>
</dbReference>
<dbReference type="PRO" id="PR:Q9JHB5"/>
<dbReference type="Proteomes" id="UP000002494">
    <property type="component" value="Chromosome 19"/>
</dbReference>
<dbReference type="Bgee" id="ENSRNOG00000049784">
    <property type="expression patterns" value="Expressed in cerebellum and 19 other cell types or tissues"/>
</dbReference>
<dbReference type="GO" id="GO:0005737">
    <property type="term" value="C:cytoplasm"/>
    <property type="evidence" value="ECO:0000266"/>
    <property type="project" value="RGD"/>
</dbReference>
<dbReference type="GO" id="GO:1902555">
    <property type="term" value="C:endoribonuclease complex"/>
    <property type="evidence" value="ECO:0000266"/>
    <property type="project" value="RGD"/>
</dbReference>
<dbReference type="GO" id="GO:0005794">
    <property type="term" value="C:Golgi apparatus"/>
    <property type="evidence" value="ECO:0007669"/>
    <property type="project" value="UniProtKB-SubCell"/>
</dbReference>
<dbReference type="GO" id="GO:0005654">
    <property type="term" value="C:nucleoplasm"/>
    <property type="evidence" value="ECO:0007669"/>
    <property type="project" value="Ensembl"/>
</dbReference>
<dbReference type="GO" id="GO:0005634">
    <property type="term" value="C:nucleus"/>
    <property type="evidence" value="ECO:0000318"/>
    <property type="project" value="GO_Central"/>
</dbReference>
<dbReference type="GO" id="GO:0048471">
    <property type="term" value="C:perinuclear region of cytoplasm"/>
    <property type="evidence" value="ECO:0007669"/>
    <property type="project" value="UniProtKB-SubCell"/>
</dbReference>
<dbReference type="GO" id="GO:0031687">
    <property type="term" value="F:A2A adenosine receptor binding"/>
    <property type="evidence" value="ECO:0000353"/>
    <property type="project" value="RGD"/>
</dbReference>
<dbReference type="GO" id="GO:0046872">
    <property type="term" value="F:metal ion binding"/>
    <property type="evidence" value="ECO:0007669"/>
    <property type="project" value="UniProtKB-KW"/>
</dbReference>
<dbReference type="GO" id="GO:0044877">
    <property type="term" value="F:protein-containing complex binding"/>
    <property type="evidence" value="ECO:0000314"/>
    <property type="project" value="RGD"/>
</dbReference>
<dbReference type="GO" id="GO:0003723">
    <property type="term" value="F:RNA binding"/>
    <property type="evidence" value="ECO:0000318"/>
    <property type="project" value="GO_Central"/>
</dbReference>
<dbReference type="GO" id="GO:0004521">
    <property type="term" value="F:RNA endonuclease activity"/>
    <property type="evidence" value="ECO:0000318"/>
    <property type="project" value="GO_Central"/>
</dbReference>
<dbReference type="GO" id="GO:0043565">
    <property type="term" value="F:sequence-specific DNA binding"/>
    <property type="evidence" value="ECO:0007669"/>
    <property type="project" value="InterPro"/>
</dbReference>
<dbReference type="GO" id="GO:0030154">
    <property type="term" value="P:cell differentiation"/>
    <property type="evidence" value="ECO:0007669"/>
    <property type="project" value="UniProtKB-KW"/>
</dbReference>
<dbReference type="GO" id="GO:0030422">
    <property type="term" value="P:siRNA processing"/>
    <property type="evidence" value="ECO:0000266"/>
    <property type="project" value="RGD"/>
</dbReference>
<dbReference type="GO" id="GO:0007283">
    <property type="term" value="P:spermatogenesis"/>
    <property type="evidence" value="ECO:0007669"/>
    <property type="project" value="UniProtKB-KW"/>
</dbReference>
<dbReference type="FunFam" id="1.20.58.190:FF:000002">
    <property type="entry name" value="Translin-associated factor X"/>
    <property type="match status" value="1"/>
</dbReference>
<dbReference type="FunFam" id="1.20.58.200:FF:000001">
    <property type="entry name" value="Translin-associated factor X"/>
    <property type="match status" value="1"/>
</dbReference>
<dbReference type="Gene3D" id="1.20.58.190">
    <property type="entry name" value="Translin, domain 1"/>
    <property type="match status" value="1"/>
</dbReference>
<dbReference type="Gene3D" id="1.20.58.200">
    <property type="entry name" value="Translin, domain 2"/>
    <property type="match status" value="1"/>
</dbReference>
<dbReference type="InterPro" id="IPR016069">
    <property type="entry name" value="Translin_C"/>
</dbReference>
<dbReference type="InterPro" id="IPR002848">
    <property type="entry name" value="Translin_fam"/>
</dbReference>
<dbReference type="InterPro" id="IPR016068">
    <property type="entry name" value="Translin_N"/>
</dbReference>
<dbReference type="InterPro" id="IPR036081">
    <property type="entry name" value="Translin_sf"/>
</dbReference>
<dbReference type="PANTHER" id="PTHR10741">
    <property type="entry name" value="TRANSLIN AND TRANSLIN ASSOCIATED PROTEIN X"/>
    <property type="match status" value="1"/>
</dbReference>
<dbReference type="Pfam" id="PF01997">
    <property type="entry name" value="Translin"/>
    <property type="match status" value="1"/>
</dbReference>
<dbReference type="SUPFAM" id="SSF74784">
    <property type="entry name" value="Translin"/>
    <property type="match status" value="1"/>
</dbReference>